<feature type="chain" id="PRO_0000271272" description="Monothiol glutaredoxin-S3">
    <location>
        <begin position="1"/>
        <end position="136"/>
    </location>
</feature>
<feature type="domain" description="Glutaredoxin" evidence="3">
    <location>
        <begin position="18"/>
        <end position="135"/>
    </location>
</feature>
<feature type="short sequence motif" description="Responsive for interaction with TGA factors" evidence="1">
    <location>
        <begin position="133"/>
        <end position="136"/>
    </location>
</feature>
<feature type="binding site" evidence="2">
    <location>
        <position position="38"/>
    </location>
    <ligand>
        <name>[2Fe-2S] cluster</name>
        <dbReference type="ChEBI" id="CHEBI:190135"/>
        <note>ligand shared between dimeric partners</note>
    </ligand>
</feature>
<reference key="1">
    <citation type="journal article" date="2002" name="Nature">
        <title>The genome sequence and structure of rice chromosome 1.</title>
        <authorList>
            <person name="Sasaki T."/>
            <person name="Matsumoto T."/>
            <person name="Yamamoto K."/>
            <person name="Sakata K."/>
            <person name="Baba T."/>
            <person name="Katayose Y."/>
            <person name="Wu J."/>
            <person name="Niimura Y."/>
            <person name="Cheng Z."/>
            <person name="Nagamura Y."/>
            <person name="Antonio B.A."/>
            <person name="Kanamori H."/>
            <person name="Hosokawa S."/>
            <person name="Masukawa M."/>
            <person name="Arikawa K."/>
            <person name="Chiden Y."/>
            <person name="Hayashi M."/>
            <person name="Okamoto M."/>
            <person name="Ando T."/>
            <person name="Aoki H."/>
            <person name="Arita K."/>
            <person name="Hamada M."/>
            <person name="Harada C."/>
            <person name="Hijishita S."/>
            <person name="Honda M."/>
            <person name="Ichikawa Y."/>
            <person name="Idonuma A."/>
            <person name="Iijima M."/>
            <person name="Ikeda M."/>
            <person name="Ikeno M."/>
            <person name="Ito S."/>
            <person name="Ito T."/>
            <person name="Ito Y."/>
            <person name="Ito Y."/>
            <person name="Iwabuchi A."/>
            <person name="Kamiya K."/>
            <person name="Karasawa W."/>
            <person name="Katagiri S."/>
            <person name="Kikuta A."/>
            <person name="Kobayashi N."/>
            <person name="Kono I."/>
            <person name="Machita K."/>
            <person name="Maehara T."/>
            <person name="Mizuno H."/>
            <person name="Mizubayashi T."/>
            <person name="Mukai Y."/>
            <person name="Nagasaki H."/>
            <person name="Nakashima M."/>
            <person name="Nakama Y."/>
            <person name="Nakamichi Y."/>
            <person name="Nakamura M."/>
            <person name="Namiki N."/>
            <person name="Negishi M."/>
            <person name="Ohta I."/>
            <person name="Ono N."/>
            <person name="Saji S."/>
            <person name="Sakai K."/>
            <person name="Shibata M."/>
            <person name="Shimokawa T."/>
            <person name="Shomura A."/>
            <person name="Song J."/>
            <person name="Takazaki Y."/>
            <person name="Terasawa K."/>
            <person name="Tsuji K."/>
            <person name="Waki K."/>
            <person name="Yamagata H."/>
            <person name="Yamane H."/>
            <person name="Yoshiki S."/>
            <person name="Yoshihara R."/>
            <person name="Yukawa K."/>
            <person name="Zhong H."/>
            <person name="Iwama H."/>
            <person name="Endo T."/>
            <person name="Ito H."/>
            <person name="Hahn J.H."/>
            <person name="Kim H.-I."/>
            <person name="Eun M.-Y."/>
            <person name="Yano M."/>
            <person name="Jiang J."/>
            <person name="Gojobori T."/>
        </authorList>
    </citation>
    <scope>NUCLEOTIDE SEQUENCE [LARGE SCALE GENOMIC DNA]</scope>
    <source>
        <strain>cv. Nipponbare</strain>
    </source>
</reference>
<reference key="2">
    <citation type="journal article" date="2005" name="Nature">
        <title>The map-based sequence of the rice genome.</title>
        <authorList>
            <consortium name="International rice genome sequencing project (IRGSP)"/>
        </authorList>
    </citation>
    <scope>NUCLEOTIDE SEQUENCE [LARGE SCALE GENOMIC DNA]</scope>
    <source>
        <strain>cv. Nipponbare</strain>
    </source>
</reference>
<reference key="3">
    <citation type="journal article" date="2008" name="Nucleic Acids Res.">
        <title>The rice annotation project database (RAP-DB): 2008 update.</title>
        <authorList>
            <consortium name="The rice annotation project (RAP)"/>
        </authorList>
    </citation>
    <scope>GENOME REANNOTATION</scope>
    <source>
        <strain>cv. Nipponbare</strain>
    </source>
</reference>
<reference key="4">
    <citation type="journal article" date="2013" name="Rice">
        <title>Improvement of the Oryza sativa Nipponbare reference genome using next generation sequence and optical map data.</title>
        <authorList>
            <person name="Kawahara Y."/>
            <person name="de la Bastide M."/>
            <person name="Hamilton J.P."/>
            <person name="Kanamori H."/>
            <person name="McCombie W.R."/>
            <person name="Ouyang S."/>
            <person name="Schwartz D.C."/>
            <person name="Tanaka T."/>
            <person name="Wu J."/>
            <person name="Zhou S."/>
            <person name="Childs K.L."/>
            <person name="Davidson R.M."/>
            <person name="Lin H."/>
            <person name="Quesada-Ocampo L."/>
            <person name="Vaillancourt B."/>
            <person name="Sakai H."/>
            <person name="Lee S.S."/>
            <person name="Kim J."/>
            <person name="Numa H."/>
            <person name="Itoh T."/>
            <person name="Buell C.R."/>
            <person name="Matsumoto T."/>
        </authorList>
    </citation>
    <scope>GENOME REANNOTATION</scope>
    <source>
        <strain>cv. Nipponbare</strain>
    </source>
</reference>
<reference key="5">
    <citation type="journal article" date="2003" name="Science">
        <title>Collection, mapping, and annotation of over 28,000 cDNA clones from japonica rice.</title>
        <authorList>
            <consortium name="The rice full-length cDNA consortium"/>
        </authorList>
    </citation>
    <scope>NUCLEOTIDE SEQUENCE [LARGE SCALE MRNA]</scope>
    <source>
        <strain>cv. Nipponbare</strain>
    </source>
</reference>
<reference key="6">
    <citation type="journal article" date="2006" name="J. Exp. Bot.">
        <title>Genome-wide analysis of plant glutaredoxin systems.</title>
        <authorList>
            <person name="Rouhier N."/>
            <person name="Couturier J."/>
            <person name="Jacquot J.-P."/>
        </authorList>
    </citation>
    <scope>GENE FAMILY</scope>
</reference>
<sequence length="136" mass="13807">MQGARSAAAMAAAAADEEREVRRAVEEKPVVVVGRRGCCMAHVARRLLLGQGANPAVLEVGDDADPAALVDAALQARRRKDGGDKAAAGDGGGGAAVAFPAVFIGGRLVGGLDRLMAMHMAGELVPVLKQAGALWL</sequence>
<keyword id="KW-0001">2Fe-2S</keyword>
<keyword id="KW-0963">Cytoplasm</keyword>
<keyword id="KW-0408">Iron</keyword>
<keyword id="KW-0411">Iron-sulfur</keyword>
<keyword id="KW-0479">Metal-binding</keyword>
<keyword id="KW-0539">Nucleus</keyword>
<keyword id="KW-0676">Redox-active center</keyword>
<keyword id="KW-1185">Reference proteome</keyword>
<comment type="function">
    <text evidence="4">May only reduce GSH-thiol disulfides, but not protein disulfides.</text>
</comment>
<comment type="subcellular location">
    <subcellularLocation>
        <location evidence="1">Cytoplasm</location>
    </subcellularLocation>
    <subcellularLocation>
        <location evidence="1">Nucleus</location>
    </subcellularLocation>
</comment>
<comment type="similarity">
    <text evidence="4">Belongs to the glutaredoxin family. CC-type subfamily.</text>
</comment>
<comment type="sequence caution" evidence="4">
    <conflict type="erroneous initiation">
        <sequence resource="EMBL-CDS" id="BAD81621"/>
    </conflict>
</comment>
<comment type="sequence caution" evidence="4">
    <conflict type="erroneous initiation">
        <sequence resource="EMBL-CDS" id="BAD81651"/>
    </conflict>
</comment>
<gene>
    <name type="primary">GRXS3</name>
    <name type="ordered locus">Os01g0241400</name>
    <name type="ordered locus">LOC_Os01g13950</name>
    <name type="ORF">OSJNBa0010K01.30</name>
</gene>
<dbReference type="EMBL" id="AP003201">
    <property type="protein sequence ID" value="BAD81621.1"/>
    <property type="status" value="ALT_INIT"/>
    <property type="molecule type" value="Genomic_DNA"/>
</dbReference>
<dbReference type="EMBL" id="AP003210">
    <property type="protein sequence ID" value="BAD81651.1"/>
    <property type="status" value="ALT_INIT"/>
    <property type="molecule type" value="Genomic_DNA"/>
</dbReference>
<dbReference type="EMBL" id="AP008207">
    <property type="protein sequence ID" value="BAF04466.1"/>
    <property type="molecule type" value="Genomic_DNA"/>
</dbReference>
<dbReference type="EMBL" id="AP014957">
    <property type="protein sequence ID" value="BAS71274.1"/>
    <property type="molecule type" value="Genomic_DNA"/>
</dbReference>
<dbReference type="EMBL" id="AK107708">
    <property type="protein sequence ID" value="BAG98130.1"/>
    <property type="molecule type" value="mRNA"/>
</dbReference>
<dbReference type="RefSeq" id="XP_015644615.1">
    <property type="nucleotide sequence ID" value="XM_015789129.1"/>
</dbReference>
<dbReference type="SMR" id="Q0JP62"/>
<dbReference type="STRING" id="39947.Q0JP62"/>
<dbReference type="PaxDb" id="39947-Q0JP62"/>
<dbReference type="EnsemblPlants" id="Os01t0241400-01">
    <property type="protein sequence ID" value="Os01t0241400-01"/>
    <property type="gene ID" value="Os01g0241400"/>
</dbReference>
<dbReference type="Gramene" id="Os01t0241400-01">
    <property type="protein sequence ID" value="Os01t0241400-01"/>
    <property type="gene ID" value="Os01g0241400"/>
</dbReference>
<dbReference type="KEGG" id="dosa:Os01g0241400"/>
<dbReference type="eggNOG" id="KOG1752">
    <property type="taxonomic scope" value="Eukaryota"/>
</dbReference>
<dbReference type="HOGENOM" id="CLU_026126_6_2_1"/>
<dbReference type="InParanoid" id="Q0JP62"/>
<dbReference type="OMA" id="MAMHIAG"/>
<dbReference type="OrthoDB" id="418495at2759"/>
<dbReference type="Proteomes" id="UP000000763">
    <property type="component" value="Chromosome 1"/>
</dbReference>
<dbReference type="Proteomes" id="UP000059680">
    <property type="component" value="Chromosome 1"/>
</dbReference>
<dbReference type="GO" id="GO:0005737">
    <property type="term" value="C:cytoplasm"/>
    <property type="evidence" value="ECO:0007669"/>
    <property type="project" value="UniProtKB-SubCell"/>
</dbReference>
<dbReference type="GO" id="GO:0005634">
    <property type="term" value="C:nucleus"/>
    <property type="evidence" value="ECO:0007669"/>
    <property type="project" value="UniProtKB-SubCell"/>
</dbReference>
<dbReference type="GO" id="GO:0051537">
    <property type="term" value="F:2 iron, 2 sulfur cluster binding"/>
    <property type="evidence" value="ECO:0007669"/>
    <property type="project" value="UniProtKB-KW"/>
</dbReference>
<dbReference type="GO" id="GO:0046872">
    <property type="term" value="F:metal ion binding"/>
    <property type="evidence" value="ECO:0007669"/>
    <property type="project" value="UniProtKB-KW"/>
</dbReference>
<dbReference type="Gene3D" id="3.40.30.10">
    <property type="entry name" value="Glutaredoxin"/>
    <property type="match status" value="1"/>
</dbReference>
<dbReference type="InterPro" id="IPR011905">
    <property type="entry name" value="GlrX-like_pln_2"/>
</dbReference>
<dbReference type="InterPro" id="IPR036249">
    <property type="entry name" value="Thioredoxin-like_sf"/>
</dbReference>
<dbReference type="NCBIfam" id="TIGR02189">
    <property type="entry name" value="GlrX-like_plant"/>
    <property type="match status" value="1"/>
</dbReference>
<dbReference type="PANTHER" id="PTHR10168">
    <property type="entry name" value="GLUTAREDOXIN"/>
    <property type="match status" value="1"/>
</dbReference>
<dbReference type="SUPFAM" id="SSF52833">
    <property type="entry name" value="Thioredoxin-like"/>
    <property type="match status" value="1"/>
</dbReference>
<dbReference type="PROSITE" id="PS51354">
    <property type="entry name" value="GLUTAREDOXIN_2"/>
    <property type="match status" value="1"/>
</dbReference>
<accession>Q0JP62</accession>
<accession>B7F0I3</accession>
<accession>Q5NA55</accession>
<evidence type="ECO:0000250" key="1"/>
<evidence type="ECO:0000255" key="2"/>
<evidence type="ECO:0000255" key="3">
    <source>
        <dbReference type="PROSITE-ProRule" id="PRU00686"/>
    </source>
</evidence>
<evidence type="ECO:0000305" key="4"/>
<protein>
    <recommendedName>
        <fullName>Monothiol glutaredoxin-S3</fullName>
    </recommendedName>
</protein>
<name>GRXS3_ORYSJ</name>
<proteinExistence type="evidence at transcript level"/>
<organism>
    <name type="scientific">Oryza sativa subsp. japonica</name>
    <name type="common">Rice</name>
    <dbReference type="NCBI Taxonomy" id="39947"/>
    <lineage>
        <taxon>Eukaryota</taxon>
        <taxon>Viridiplantae</taxon>
        <taxon>Streptophyta</taxon>
        <taxon>Embryophyta</taxon>
        <taxon>Tracheophyta</taxon>
        <taxon>Spermatophyta</taxon>
        <taxon>Magnoliopsida</taxon>
        <taxon>Liliopsida</taxon>
        <taxon>Poales</taxon>
        <taxon>Poaceae</taxon>
        <taxon>BOP clade</taxon>
        <taxon>Oryzoideae</taxon>
        <taxon>Oryzeae</taxon>
        <taxon>Oryzinae</taxon>
        <taxon>Oryza</taxon>
        <taxon>Oryza sativa</taxon>
    </lineage>
</organism>